<evidence type="ECO:0000255" key="1">
    <source>
        <dbReference type="HAMAP-Rule" id="MF_00131"/>
    </source>
</evidence>
<reference key="1">
    <citation type="journal article" date="2008" name="PLoS ONE">
        <title>Comparative analysis of Acinetobacters: three genomes for three lifestyles.</title>
        <authorList>
            <person name="Vallenet D."/>
            <person name="Nordmann P."/>
            <person name="Barbe V."/>
            <person name="Poirel L."/>
            <person name="Mangenot S."/>
            <person name="Bataille E."/>
            <person name="Dossat C."/>
            <person name="Gas S."/>
            <person name="Kreimeyer A."/>
            <person name="Lenoble P."/>
            <person name="Oztas S."/>
            <person name="Poulain J."/>
            <person name="Segurens B."/>
            <person name="Robert C."/>
            <person name="Abergel C."/>
            <person name="Claverie J.-M."/>
            <person name="Raoult D."/>
            <person name="Medigue C."/>
            <person name="Weissenbach J."/>
            <person name="Cruveiller S."/>
        </authorList>
    </citation>
    <scope>NUCLEOTIDE SEQUENCE [LARGE SCALE GENOMIC DNA]</scope>
    <source>
        <strain>AYE</strain>
    </source>
</reference>
<feature type="chain" id="PRO_1000095687" description="Tryptophan synthase alpha chain">
    <location>
        <begin position="1"/>
        <end position="267"/>
    </location>
</feature>
<feature type="active site" description="Proton acceptor" evidence="1">
    <location>
        <position position="49"/>
    </location>
</feature>
<feature type="active site" description="Proton acceptor" evidence="1">
    <location>
        <position position="60"/>
    </location>
</feature>
<accession>B0V529</accession>
<name>TRPA_ACIBY</name>
<keyword id="KW-0028">Amino-acid biosynthesis</keyword>
<keyword id="KW-0057">Aromatic amino acid biosynthesis</keyword>
<keyword id="KW-0456">Lyase</keyword>
<keyword id="KW-0822">Tryptophan biosynthesis</keyword>
<gene>
    <name evidence="1" type="primary">trpA</name>
    <name type="ordered locus">ABAYE0613</name>
</gene>
<sequence>MSRLATRFEKLQSQQRKALVSYVMAGDPQPQVTVPLLHKMVAAGVDVIELGLPFSDPMADGPVIALAAERALAAGTNTLDALNMVKEFREQDQETPVVLMGYLNPVEVIGYEKFVSYAKQCGVDGLLLVDLPPEESKEFGAILKQHDMDQIFLLAPTSTDQRIQHVANQASGFIYYVSLKGVTGAATLDTSEAAARIEKIKGMTNVPVGVGFGISDAASAKAMGSVADAVIVGSAFVKSFATLAADEAVEQTVNKVKELRAALDELV</sequence>
<protein>
    <recommendedName>
        <fullName evidence="1">Tryptophan synthase alpha chain</fullName>
        <ecNumber evidence="1">4.2.1.20</ecNumber>
    </recommendedName>
</protein>
<proteinExistence type="inferred from homology"/>
<dbReference type="EC" id="4.2.1.20" evidence="1"/>
<dbReference type="EMBL" id="CU459141">
    <property type="protein sequence ID" value="CAM85580.1"/>
    <property type="molecule type" value="Genomic_DNA"/>
</dbReference>
<dbReference type="RefSeq" id="WP_000088559.1">
    <property type="nucleotide sequence ID" value="NZ_JBDGFB010000017.1"/>
</dbReference>
<dbReference type="SMR" id="B0V529"/>
<dbReference type="EnsemblBacteria" id="CAM85580">
    <property type="protein sequence ID" value="CAM85580"/>
    <property type="gene ID" value="ABAYE0613"/>
</dbReference>
<dbReference type="GeneID" id="92895147"/>
<dbReference type="KEGG" id="aby:ABAYE0613"/>
<dbReference type="HOGENOM" id="CLU_016734_0_0_6"/>
<dbReference type="UniPathway" id="UPA00035">
    <property type="reaction ID" value="UER00044"/>
</dbReference>
<dbReference type="GO" id="GO:0005829">
    <property type="term" value="C:cytosol"/>
    <property type="evidence" value="ECO:0007669"/>
    <property type="project" value="TreeGrafter"/>
</dbReference>
<dbReference type="GO" id="GO:0004834">
    <property type="term" value="F:tryptophan synthase activity"/>
    <property type="evidence" value="ECO:0007669"/>
    <property type="project" value="UniProtKB-UniRule"/>
</dbReference>
<dbReference type="CDD" id="cd04724">
    <property type="entry name" value="Tryptophan_synthase_alpha"/>
    <property type="match status" value="1"/>
</dbReference>
<dbReference type="FunFam" id="3.20.20.70:FF:000037">
    <property type="entry name" value="Tryptophan synthase alpha chain"/>
    <property type="match status" value="1"/>
</dbReference>
<dbReference type="Gene3D" id="3.20.20.70">
    <property type="entry name" value="Aldolase class I"/>
    <property type="match status" value="1"/>
</dbReference>
<dbReference type="HAMAP" id="MF_00131">
    <property type="entry name" value="Trp_synth_alpha"/>
    <property type="match status" value="1"/>
</dbReference>
<dbReference type="InterPro" id="IPR013785">
    <property type="entry name" value="Aldolase_TIM"/>
</dbReference>
<dbReference type="InterPro" id="IPR011060">
    <property type="entry name" value="RibuloseP-bd_barrel"/>
</dbReference>
<dbReference type="InterPro" id="IPR018204">
    <property type="entry name" value="Trp_synthase_alpha_AS"/>
</dbReference>
<dbReference type="InterPro" id="IPR002028">
    <property type="entry name" value="Trp_synthase_suA"/>
</dbReference>
<dbReference type="NCBIfam" id="TIGR00262">
    <property type="entry name" value="trpA"/>
    <property type="match status" value="1"/>
</dbReference>
<dbReference type="PANTHER" id="PTHR43406:SF1">
    <property type="entry name" value="TRYPTOPHAN SYNTHASE ALPHA CHAIN, CHLOROPLASTIC"/>
    <property type="match status" value="1"/>
</dbReference>
<dbReference type="PANTHER" id="PTHR43406">
    <property type="entry name" value="TRYPTOPHAN SYNTHASE, ALPHA CHAIN"/>
    <property type="match status" value="1"/>
</dbReference>
<dbReference type="Pfam" id="PF00290">
    <property type="entry name" value="Trp_syntA"/>
    <property type="match status" value="1"/>
</dbReference>
<dbReference type="SUPFAM" id="SSF51366">
    <property type="entry name" value="Ribulose-phoshate binding barrel"/>
    <property type="match status" value="1"/>
</dbReference>
<dbReference type="PROSITE" id="PS00167">
    <property type="entry name" value="TRP_SYNTHASE_ALPHA"/>
    <property type="match status" value="1"/>
</dbReference>
<comment type="function">
    <text evidence="1">The alpha subunit is responsible for the aldol cleavage of indoleglycerol phosphate to indole and glyceraldehyde 3-phosphate.</text>
</comment>
<comment type="catalytic activity">
    <reaction evidence="1">
        <text>(1S,2R)-1-C-(indol-3-yl)glycerol 3-phosphate + L-serine = D-glyceraldehyde 3-phosphate + L-tryptophan + H2O</text>
        <dbReference type="Rhea" id="RHEA:10532"/>
        <dbReference type="ChEBI" id="CHEBI:15377"/>
        <dbReference type="ChEBI" id="CHEBI:33384"/>
        <dbReference type="ChEBI" id="CHEBI:57912"/>
        <dbReference type="ChEBI" id="CHEBI:58866"/>
        <dbReference type="ChEBI" id="CHEBI:59776"/>
        <dbReference type="EC" id="4.2.1.20"/>
    </reaction>
</comment>
<comment type="pathway">
    <text evidence="1">Amino-acid biosynthesis; L-tryptophan biosynthesis; L-tryptophan from chorismate: step 5/5.</text>
</comment>
<comment type="subunit">
    <text evidence="1">Tetramer of two alpha and two beta chains.</text>
</comment>
<comment type="similarity">
    <text evidence="1">Belongs to the TrpA family.</text>
</comment>
<organism>
    <name type="scientific">Acinetobacter baumannii (strain AYE)</name>
    <dbReference type="NCBI Taxonomy" id="509173"/>
    <lineage>
        <taxon>Bacteria</taxon>
        <taxon>Pseudomonadati</taxon>
        <taxon>Pseudomonadota</taxon>
        <taxon>Gammaproteobacteria</taxon>
        <taxon>Moraxellales</taxon>
        <taxon>Moraxellaceae</taxon>
        <taxon>Acinetobacter</taxon>
        <taxon>Acinetobacter calcoaceticus/baumannii complex</taxon>
    </lineage>
</organism>